<evidence type="ECO:0000269" key="1">
    <source>
    </source>
</evidence>
<evidence type="ECO:0000305" key="2"/>
<evidence type="ECO:0007829" key="3">
    <source>
        <dbReference type="PDB" id="1QSA"/>
    </source>
</evidence>
<evidence type="ECO:0007829" key="4">
    <source>
        <dbReference type="PDB" id="1QTE"/>
    </source>
</evidence>
<evidence type="ECO:0007829" key="5">
    <source>
        <dbReference type="PDB" id="1SLY"/>
    </source>
</evidence>
<name>SLT_ECOLI</name>
<reference key="1">
    <citation type="journal article" date="1991" name="J. Bacteriol.">
        <title>Murein-metabolizing enzymes from Escherichia coli: sequence analysis and controlled overexpression of the slt gene, which encodes the soluble lytic transglycosylase.</title>
        <authorList>
            <person name="Engel H."/>
            <person name="Kazemier B."/>
            <person name="Keck W."/>
        </authorList>
    </citation>
    <scope>NUCLEOTIDE SEQUENCE [GENOMIC DNA]</scope>
    <scope>PROTEIN SEQUENCE OF 28-41</scope>
</reference>
<reference key="2">
    <citation type="journal article" date="1995" name="Nucleic Acids Res.">
        <title>Analysis of the Escherichia coli genome VI: DNA sequence of the region from 92.8 through 100 minutes.</title>
        <authorList>
            <person name="Burland V.D."/>
            <person name="Plunkett G. III"/>
            <person name="Sofia H.J."/>
            <person name="Daniels D.L."/>
            <person name="Blattner F.R."/>
        </authorList>
    </citation>
    <scope>NUCLEOTIDE SEQUENCE [LARGE SCALE GENOMIC DNA]</scope>
    <source>
        <strain>K12 / MG1655 / ATCC 47076</strain>
    </source>
</reference>
<reference key="3">
    <citation type="journal article" date="1997" name="Science">
        <title>The complete genome sequence of Escherichia coli K-12.</title>
        <authorList>
            <person name="Blattner F.R."/>
            <person name="Plunkett G. III"/>
            <person name="Bloch C.A."/>
            <person name="Perna N.T."/>
            <person name="Burland V."/>
            <person name="Riley M."/>
            <person name="Collado-Vides J."/>
            <person name="Glasner J.D."/>
            <person name="Rode C.K."/>
            <person name="Mayhew G.F."/>
            <person name="Gregor J."/>
            <person name="Davis N.W."/>
            <person name="Kirkpatrick H.A."/>
            <person name="Goeden M.A."/>
            <person name="Rose D.J."/>
            <person name="Mau B."/>
            <person name="Shao Y."/>
        </authorList>
    </citation>
    <scope>NUCLEOTIDE SEQUENCE [LARGE SCALE GENOMIC DNA]</scope>
    <source>
        <strain>K12 / MG1655 / ATCC 47076</strain>
    </source>
</reference>
<reference key="4">
    <citation type="journal article" date="2006" name="Mol. Syst. Biol.">
        <title>Highly accurate genome sequences of Escherichia coli K-12 strains MG1655 and W3110.</title>
        <authorList>
            <person name="Hayashi K."/>
            <person name="Morooka N."/>
            <person name="Yamamoto Y."/>
            <person name="Fujita K."/>
            <person name="Isono K."/>
            <person name="Choi S."/>
            <person name="Ohtsubo E."/>
            <person name="Baba T."/>
            <person name="Wanner B.L."/>
            <person name="Mori H."/>
            <person name="Horiuchi T."/>
        </authorList>
    </citation>
    <scope>NUCLEOTIDE SEQUENCE [LARGE SCALE GENOMIC DNA]</scope>
    <source>
        <strain>K12 / W3110 / ATCC 27325 / DSM 5911</strain>
    </source>
</reference>
<reference key="5">
    <citation type="journal article" date="1980" name="Nucleic Acids Res.">
        <title>DNA sequence of the E. coli trpR gene and prediction of the amino acid sequence of Trp repressor.</title>
        <authorList>
            <person name="Singleton C.K."/>
            <person name="Roeder W.D."/>
            <person name="Bogosian G."/>
            <person name="Somerville R.L."/>
            <person name="Weith H.L."/>
        </authorList>
    </citation>
    <scope>NUCLEOTIDE SEQUENCE [GENOMIC DNA] OF 549-639</scope>
</reference>
<reference key="6">
    <citation type="journal article" date="1980" name="Proc. Natl. Acad. Sci. U.S.A.">
        <title>Nucleotide sequence and expression of Escherichia coli trpR, the structural gene for the trp aporepressor.</title>
        <authorList>
            <person name="Gunsalus R.P."/>
            <person name="Yanofsky C."/>
        </authorList>
    </citation>
    <scope>NUCLEOTIDE SEQUENCE [GENOMIC DNA] OF 640-645</scope>
</reference>
<reference key="7">
    <citation type="journal article" date="1989" name="Mol. Gen. Genet.">
        <title>Molecular cloning, overexpression and mapping of the slt gene encoding the soluble lytic transglycosylase of Escherichia coli.</title>
        <authorList>
            <person name="Betzner A.S."/>
            <person name="Keck W."/>
        </authorList>
    </citation>
    <scope>GENE MAPPING</scope>
</reference>
<reference key="8">
    <citation type="journal article" date="1997" name="Electrophoresis">
        <title>Escherichia coli proteome analysis using the gene-protein database.</title>
        <authorList>
            <person name="VanBogelen R.A."/>
            <person name="Abshire K.Z."/>
            <person name="Moldover B."/>
            <person name="Olson E.R."/>
            <person name="Neidhardt F.C."/>
        </authorList>
    </citation>
    <scope>IDENTIFICATION BY 2D-GEL</scope>
</reference>
<reference key="9">
    <citation type="journal article" date="1990" name="J. Mol. Biol.">
        <title>Crystallization of the soluble lytic transglycosylase from Escherichia coli K12.</title>
        <authorList>
            <person name="Rozeboom H.J."/>
            <person name="Dijkstra B.W."/>
            <person name="Engel H."/>
            <person name="Keck W."/>
        </authorList>
    </citation>
    <scope>X-RAY CRYSTALLOGRAPHY (2.8 ANGSTROMS)</scope>
    <source>
        <strain>K12</strain>
    </source>
</reference>
<reference key="10">
    <citation type="journal article" date="1994" name="Nature">
        <title>Doughnut-shaped structure of a bacterial muramidase revealed by X-ray crystallography.</title>
        <authorList>
            <person name="Thunnissen A.-M.W.H."/>
            <person name="Dijkstra A.J."/>
            <person name="Kalk K.H."/>
            <person name="Rozeboom H.J."/>
            <person name="Engel H."/>
            <person name="Keck W."/>
            <person name="Dijkstra B.W."/>
        </authorList>
    </citation>
    <scope>X-RAY CRYSTALLOGRAPHY (2.7 ANGSTROMS)</scope>
</reference>
<reference key="11">
    <citation type="journal article" date="1995" name="Biochemistry">
        <title>Structure of the 70-kDa soluble lytic transglycosylase complexed with bulgecin A. Implications for the enzymatic mechanism.</title>
        <authorList>
            <person name="Thunnissen A.-M.W.H."/>
            <person name="Rozeboom H.J."/>
            <person name="Kalk K.H."/>
            <person name="Dijkstra B.W."/>
        </authorList>
    </citation>
    <scope>X-RAY CRYSTALLOGRAPHY (2.8 ANGSTROMS)</scope>
</reference>
<reference key="12">
    <citation type="journal article" date="1999" name="J. Mol. Biol.">
        <title>High resolution crystal structures of the Escherichia coli lytic transglycosylase Slt70 and its complex with a peptidoglycan fragment.</title>
        <authorList>
            <person name="van Asselt E.J."/>
            <person name="Thunnissen A.-M.W.H."/>
            <person name="Dijkstra B.W."/>
        </authorList>
    </citation>
    <scope>X-RAY CRYSTALLOGRAPHY (1.65 ANGSTROMS)</scope>
</reference>
<sequence length="645" mass="73353">MEKAKQVTWRLLAAGVCLLTVSSVARADSLDEQRSRYAQIKQAWDNRQMDVVEQMMPGLKDYPLYPYLEYRQITDDLMNQPAVTVTNFVRANPTLPPARTLQSRFVNELARREDWRGLLAFSPEKPGTTEAQCNYYYAKWNTGQSEEAWQGAKELWLTGKSQPNACDKLFSVWRASGKQDPLAYLERIRLAMKAGNTGLVTVLAGQMPADYQTIASAIISLANNPNTVLTFARTTGATDFTRQMAAVAFASVARQDAENARLMIPSLAQAQQLNEDQIQELRDIVAWRLMGNDVTDEQAKWRDDAIMRSQSTSLIERRVRMALGTGDRRGLNTWLARLPMEAKEKDEWRYWQADLLLERGREAEAKEILHQLMQQRGFYPMVAAQRIGEEYELKIDKAPQNVDSALTQGPEMARVRELMYWNLDNTARSEWANLVKSKSKTEQAQLARYAFNNQWWDLSVQATIAGKLWDHLEERFPLAYNDLFKRYTSGKEIPQSYAMAIARQESAWNPKVKSPVGASGLMQIMPGTATHTVKMFSIPGYSSPGQLLDPETNINIGTSYLQYVYQQFGNNRIFSSAAYNAGPGRVRTWLGNSAGRIDAVAFVESIPFSETRGYVKNVLAYDAYYRYFMGDKPTLMSATEWGRRY</sequence>
<protein>
    <recommendedName>
        <fullName>Soluble lytic murein transglycosylase</fullName>
        <ecNumber>4.2.2.n1</ecNumber>
    </recommendedName>
    <alternativeName>
        <fullName>Exomuramidase</fullName>
    </alternativeName>
    <alternativeName>
        <fullName>Peptidoglycan lytic exotransglycosylase</fullName>
    </alternativeName>
    <alternativeName>
        <fullName>Slt70</fullName>
    </alternativeName>
</protein>
<feature type="signal peptide" evidence="1">
    <location>
        <begin position="1"/>
        <end position="27"/>
    </location>
</feature>
<feature type="chain" id="PRO_0000032778" description="Soluble lytic murein transglycosylase">
    <location>
        <begin position="28"/>
        <end position="645"/>
    </location>
</feature>
<feature type="region of interest" description="Slt-type domain">
    <location>
        <begin position="492"/>
        <end position="582"/>
    </location>
</feature>
<feature type="active site">
    <location>
        <position position="505"/>
    </location>
</feature>
<feature type="disulfide bond">
    <location>
        <begin position="133"/>
        <end position="166"/>
    </location>
</feature>
<feature type="mutagenesis site" description="Inactivates the enzyme.">
    <original>E</original>
    <variation>Q</variation>
    <location>
        <position position="505"/>
    </location>
</feature>
<feature type="sequence conflict" description="In Ref. 1; AAA24634." evidence="2" ref="1">
    <original>P</original>
    <variation>L</variation>
    <location>
        <position position="583"/>
    </location>
</feature>
<feature type="helix" evidence="3">
    <location>
        <begin position="30"/>
        <end position="45"/>
    </location>
</feature>
<feature type="helix" evidence="3">
    <location>
        <begin position="49"/>
        <end position="55"/>
    </location>
</feature>
<feature type="helix" evidence="3">
    <location>
        <begin position="57"/>
        <end position="59"/>
    </location>
</feature>
<feature type="helix" evidence="3">
    <location>
        <begin position="65"/>
        <end position="75"/>
    </location>
</feature>
<feature type="helix" evidence="3">
    <location>
        <begin position="76"/>
        <end position="79"/>
    </location>
</feature>
<feature type="helix" evidence="3">
    <location>
        <begin position="82"/>
        <end position="91"/>
    </location>
</feature>
<feature type="helix" evidence="3">
    <location>
        <begin position="96"/>
        <end position="111"/>
    </location>
</feature>
<feature type="helix" evidence="3">
    <location>
        <begin position="115"/>
        <end position="121"/>
    </location>
</feature>
<feature type="helix" evidence="3">
    <location>
        <begin position="129"/>
        <end position="141"/>
    </location>
</feature>
<feature type="helix" evidence="3">
    <location>
        <begin position="145"/>
        <end position="156"/>
    </location>
</feature>
<feature type="helix" evidence="3">
    <location>
        <begin position="166"/>
        <end position="175"/>
    </location>
</feature>
<feature type="helix" evidence="3">
    <location>
        <begin position="181"/>
        <end position="193"/>
    </location>
</feature>
<feature type="helix" evidence="3">
    <location>
        <begin position="197"/>
        <end position="205"/>
    </location>
</feature>
<feature type="helix" evidence="3">
    <location>
        <begin position="209"/>
        <end position="211"/>
    </location>
</feature>
<feature type="helix" evidence="3">
    <location>
        <begin position="212"/>
        <end position="223"/>
    </location>
</feature>
<feature type="helix" evidence="3">
    <location>
        <begin position="225"/>
        <end position="227"/>
    </location>
</feature>
<feature type="helix" evidence="3">
    <location>
        <begin position="228"/>
        <end position="234"/>
    </location>
</feature>
<feature type="helix" evidence="3">
    <location>
        <begin position="239"/>
        <end position="255"/>
    </location>
</feature>
<feature type="helix" evidence="3">
    <location>
        <begin position="257"/>
        <end position="270"/>
    </location>
</feature>
<feature type="helix" evidence="3">
    <location>
        <begin position="275"/>
        <end position="287"/>
    </location>
</feature>
<feature type="strand" evidence="4">
    <location>
        <begin position="291"/>
        <end position="293"/>
    </location>
</feature>
<feature type="helix" evidence="3">
    <location>
        <begin position="296"/>
        <end position="307"/>
    </location>
</feature>
<feature type="helix" evidence="3">
    <location>
        <begin position="312"/>
        <end position="324"/>
    </location>
</feature>
<feature type="helix" evidence="3">
    <location>
        <begin position="328"/>
        <end position="337"/>
    </location>
</feature>
<feature type="helix" evidence="3">
    <location>
        <begin position="342"/>
        <end position="344"/>
    </location>
</feature>
<feature type="helix" evidence="3">
    <location>
        <begin position="346"/>
        <end position="358"/>
    </location>
</feature>
<feature type="helix" evidence="3">
    <location>
        <begin position="362"/>
        <end position="373"/>
    </location>
</feature>
<feature type="helix" evidence="3">
    <location>
        <begin position="378"/>
        <end position="386"/>
    </location>
</feature>
<feature type="helix" evidence="3">
    <location>
        <begin position="405"/>
        <end position="408"/>
    </location>
</feature>
<feature type="helix" evidence="3">
    <location>
        <begin position="410"/>
        <end position="420"/>
    </location>
</feature>
<feature type="helix" evidence="3">
    <location>
        <begin position="424"/>
        <end position="435"/>
    </location>
</feature>
<feature type="helix" evidence="3">
    <location>
        <begin position="440"/>
        <end position="452"/>
    </location>
</feature>
<feature type="helix" evidence="3">
    <location>
        <begin position="456"/>
        <end position="465"/>
    </location>
</feature>
<feature type="helix" evidence="3">
    <location>
        <begin position="472"/>
        <end position="475"/>
    </location>
</feature>
<feature type="helix" evidence="3">
    <location>
        <begin position="481"/>
        <end position="488"/>
    </location>
</feature>
<feature type="strand" evidence="3">
    <location>
        <begin position="491"/>
        <end position="493"/>
    </location>
</feature>
<feature type="helix" evidence="3">
    <location>
        <begin position="495"/>
        <end position="506"/>
    </location>
</feature>
<feature type="turn" evidence="3">
    <location>
        <begin position="520"/>
        <end position="523"/>
    </location>
</feature>
<feature type="helix" evidence="3">
    <location>
        <begin position="526"/>
        <end position="536"/>
    </location>
</feature>
<feature type="helix" evidence="3">
    <location>
        <begin position="544"/>
        <end position="548"/>
    </location>
</feature>
<feature type="helix" evidence="3">
    <location>
        <begin position="550"/>
        <end position="567"/>
    </location>
</feature>
<feature type="turn" evidence="5">
    <location>
        <begin position="568"/>
        <end position="570"/>
    </location>
</feature>
<feature type="helix" evidence="3">
    <location>
        <begin position="572"/>
        <end position="581"/>
    </location>
</feature>
<feature type="helix" evidence="3">
    <location>
        <begin position="583"/>
        <end position="593"/>
    </location>
</feature>
<feature type="helix" evidence="3">
    <location>
        <begin position="599"/>
        <end position="605"/>
    </location>
</feature>
<feature type="helix" evidence="3">
    <location>
        <begin position="609"/>
        <end position="628"/>
    </location>
</feature>
<feature type="helix" evidence="3">
    <location>
        <begin position="638"/>
        <end position="642"/>
    </location>
</feature>
<dbReference type="EC" id="4.2.2.n1"/>
<dbReference type="EMBL" id="M69185">
    <property type="protein sequence ID" value="AAA24634.1"/>
    <property type="molecule type" value="Genomic_DNA"/>
</dbReference>
<dbReference type="EMBL" id="U14003">
    <property type="protein sequence ID" value="AAA97288.1"/>
    <property type="status" value="ALT_INIT"/>
    <property type="molecule type" value="Genomic_DNA"/>
</dbReference>
<dbReference type="EMBL" id="U00096">
    <property type="protein sequence ID" value="AAC77345.2"/>
    <property type="molecule type" value="Genomic_DNA"/>
</dbReference>
<dbReference type="EMBL" id="AP009048">
    <property type="protein sequence ID" value="BAE78381.1"/>
    <property type="molecule type" value="Genomic_DNA"/>
</dbReference>
<dbReference type="EMBL" id="J01715">
    <property type="status" value="NOT_ANNOTATED_CDS"/>
    <property type="molecule type" value="Genomic_DNA"/>
</dbReference>
<dbReference type="PIR" id="S56616">
    <property type="entry name" value="QQECW1"/>
</dbReference>
<dbReference type="RefSeq" id="NP_418809.4">
    <property type="nucleotide sequence ID" value="NC_000913.3"/>
</dbReference>
<dbReference type="RefSeq" id="WP_000409451.1">
    <property type="nucleotide sequence ID" value="NZ_STEB01000033.1"/>
</dbReference>
<dbReference type="PDB" id="1QSA">
    <property type="method" value="X-ray"/>
    <property type="resolution" value="1.65 A"/>
    <property type="chains" value="A=28-645"/>
</dbReference>
<dbReference type="PDB" id="1QTE">
    <property type="method" value="X-ray"/>
    <property type="resolution" value="1.90 A"/>
    <property type="chains" value="A=28-645"/>
</dbReference>
<dbReference type="PDB" id="1SLY">
    <property type="method" value="X-ray"/>
    <property type="resolution" value="2.80 A"/>
    <property type="chains" value="A=28-645"/>
</dbReference>
<dbReference type="PDBsum" id="1QSA"/>
<dbReference type="PDBsum" id="1QTE"/>
<dbReference type="PDBsum" id="1SLY"/>
<dbReference type="SMR" id="P0AGC3"/>
<dbReference type="BioGRID" id="4260799">
    <property type="interactions" value="211"/>
</dbReference>
<dbReference type="FunCoup" id="P0AGC3">
    <property type="interactions" value="204"/>
</dbReference>
<dbReference type="IntAct" id="P0AGC3">
    <property type="interactions" value="5"/>
</dbReference>
<dbReference type="STRING" id="511145.b4392"/>
<dbReference type="DrugBank" id="DB02595">
    <property type="generic name" value="(2R,3S,5S)-2-(Hydroxymethyl)-5-[(2-sulfoethyl)carbamoyl]-3-pyrrolidiniumyl 2-acetamido-2-deoxy-4-O-sulfo-beta-D-glucopyranoside"/>
</dbReference>
<dbReference type="CAZy" id="GH23">
    <property type="family name" value="Glycoside Hydrolase Family 23"/>
</dbReference>
<dbReference type="jPOST" id="P0AGC3"/>
<dbReference type="PaxDb" id="511145-b4392"/>
<dbReference type="EnsemblBacteria" id="AAC77345">
    <property type="protein sequence ID" value="AAC77345"/>
    <property type="gene ID" value="b4392"/>
</dbReference>
<dbReference type="GeneID" id="75202926"/>
<dbReference type="GeneID" id="948908"/>
<dbReference type="KEGG" id="ecj:JW4355"/>
<dbReference type="KEGG" id="eco:b4392"/>
<dbReference type="KEGG" id="ecoc:C3026_23735"/>
<dbReference type="PATRIC" id="fig|1411691.4.peg.2292"/>
<dbReference type="EchoBASE" id="EB0943"/>
<dbReference type="eggNOG" id="COG0741">
    <property type="taxonomic scope" value="Bacteria"/>
</dbReference>
<dbReference type="HOGENOM" id="CLU_019016_1_1_6"/>
<dbReference type="InParanoid" id="P0AGC3"/>
<dbReference type="OMA" id="RQESAFM"/>
<dbReference type="OrthoDB" id="92254at2"/>
<dbReference type="PhylomeDB" id="P0AGC3"/>
<dbReference type="BioCyc" id="EcoCyc:EG10950-MONOMER"/>
<dbReference type="BioCyc" id="MetaCyc:EG10950-MONOMER"/>
<dbReference type="EvolutionaryTrace" id="P0AGC3"/>
<dbReference type="PRO" id="PR:P0AGC3"/>
<dbReference type="Proteomes" id="UP000000625">
    <property type="component" value="Chromosome"/>
</dbReference>
<dbReference type="GO" id="GO:0016020">
    <property type="term" value="C:membrane"/>
    <property type="evidence" value="ECO:0007669"/>
    <property type="project" value="InterPro"/>
</dbReference>
<dbReference type="GO" id="GO:0030288">
    <property type="term" value="C:outer membrane-bounded periplasmic space"/>
    <property type="evidence" value="ECO:0000314"/>
    <property type="project" value="EcoCyc"/>
</dbReference>
<dbReference type="GO" id="GO:0009274">
    <property type="term" value="C:peptidoglycan-based cell wall"/>
    <property type="evidence" value="ECO:0000314"/>
    <property type="project" value="EcoCyc"/>
</dbReference>
<dbReference type="GO" id="GO:0004553">
    <property type="term" value="F:hydrolase activity, hydrolyzing O-glycosyl compounds"/>
    <property type="evidence" value="ECO:0007669"/>
    <property type="project" value="InterPro"/>
</dbReference>
<dbReference type="GO" id="GO:0008932">
    <property type="term" value="F:lytic endotransglycosylase activity"/>
    <property type="evidence" value="ECO:0000314"/>
    <property type="project" value="EcoCyc"/>
</dbReference>
<dbReference type="GO" id="GO:0008933">
    <property type="term" value="F:peptidoglycan lytic transglycosylase activity"/>
    <property type="evidence" value="ECO:0000314"/>
    <property type="project" value="EcoliWiki"/>
</dbReference>
<dbReference type="GO" id="GO:0071555">
    <property type="term" value="P:cell wall organization"/>
    <property type="evidence" value="ECO:0007669"/>
    <property type="project" value="UniProtKB-KW"/>
</dbReference>
<dbReference type="GO" id="GO:0009253">
    <property type="term" value="P:peptidoglycan catabolic process"/>
    <property type="evidence" value="ECO:0000314"/>
    <property type="project" value="EcoCyc"/>
</dbReference>
<dbReference type="CDD" id="cd13401">
    <property type="entry name" value="Slt70-like"/>
    <property type="match status" value="1"/>
</dbReference>
<dbReference type="FunFam" id="1.10.530.10:FF:000011">
    <property type="entry name" value="Soluble lytic murein transglycosylase"/>
    <property type="match status" value="1"/>
</dbReference>
<dbReference type="FunFam" id="1.25.20.10:FF:000001">
    <property type="entry name" value="Soluble lytic murein transglycosylase"/>
    <property type="match status" value="1"/>
</dbReference>
<dbReference type="Gene3D" id="1.10.530.10">
    <property type="match status" value="1"/>
</dbReference>
<dbReference type="Gene3D" id="1.25.20.10">
    <property type="entry name" value="Bacterial muramidases"/>
    <property type="match status" value="1"/>
</dbReference>
<dbReference type="Gene3D" id="1.10.1240.20">
    <property type="entry name" value="Lytic transglycosylase, superhelical linker domain"/>
    <property type="match status" value="1"/>
</dbReference>
<dbReference type="InterPro" id="IPR023346">
    <property type="entry name" value="Lysozyme-like_dom_sf"/>
</dbReference>
<dbReference type="InterPro" id="IPR037061">
    <property type="entry name" value="Lytic_TGlycoase_superhlx_L_sf"/>
</dbReference>
<dbReference type="InterPro" id="IPR012289">
    <property type="entry name" value="Lytic_TGlycosylase_superhlx_L"/>
</dbReference>
<dbReference type="InterPro" id="IPR008939">
    <property type="entry name" value="Lytic_TGlycosylase_superhlx_U"/>
</dbReference>
<dbReference type="InterPro" id="IPR000189">
    <property type="entry name" value="Transglyc_AS"/>
</dbReference>
<dbReference type="InterPro" id="IPR008258">
    <property type="entry name" value="Transglycosylase_SLT_dom_1"/>
</dbReference>
<dbReference type="NCBIfam" id="NF008631">
    <property type="entry name" value="PRK11619.1"/>
    <property type="match status" value="1"/>
</dbReference>
<dbReference type="PANTHER" id="PTHR37423:SF5">
    <property type="entry name" value="SOLUBLE LYTIC MUREIN TRANSGLYCOSYLASE"/>
    <property type="match status" value="1"/>
</dbReference>
<dbReference type="PANTHER" id="PTHR37423">
    <property type="entry name" value="SOLUBLE LYTIC MUREIN TRANSGLYCOSYLASE-RELATED"/>
    <property type="match status" value="1"/>
</dbReference>
<dbReference type="Pfam" id="PF01464">
    <property type="entry name" value="SLT"/>
    <property type="match status" value="1"/>
</dbReference>
<dbReference type="Pfam" id="PF14718">
    <property type="entry name" value="SLT_L"/>
    <property type="match status" value="1"/>
</dbReference>
<dbReference type="SUPFAM" id="SSF48435">
    <property type="entry name" value="Bacterial muramidases"/>
    <property type="match status" value="1"/>
</dbReference>
<dbReference type="SUPFAM" id="SSF53955">
    <property type="entry name" value="Lysozyme-like"/>
    <property type="match status" value="1"/>
</dbReference>
<dbReference type="PROSITE" id="PS00922">
    <property type="entry name" value="TRANSGLYCOSYLASE"/>
    <property type="match status" value="1"/>
</dbReference>
<keyword id="KW-0002">3D-structure</keyword>
<keyword id="KW-0961">Cell wall biogenesis/degradation</keyword>
<keyword id="KW-0903">Direct protein sequencing</keyword>
<keyword id="KW-1015">Disulfide bond</keyword>
<keyword id="KW-0456">Lyase</keyword>
<keyword id="KW-0574">Periplasm</keyword>
<keyword id="KW-1185">Reference proteome</keyword>
<keyword id="KW-0732">Signal</keyword>
<accession>P0AGC3</accession>
<accession>P03810</accession>
<accession>P76820</accession>
<accession>Q2M5S5</accession>
<accession>Q8XB18</accession>
<comment type="function">
    <text>Murein-degrading enzyme. Catalyzes the cleavage of the glycosidic bonds between N-acetylmuramic acid and N-acetylglucosamine residues in peptidoglycan. May play a role in recycling of muropeptides during cell elongation and/or cell division.</text>
</comment>
<comment type="catalytic activity">
    <reaction>
        <text>Exolytic cleavage of the (1-&gt;4)-beta-glycosidic linkage between N-acetylmuramic acid (MurNAc) and N-acetylglucosamine (GlcNAc) residues in peptidoglycan, from either the reducing or the non-reducing ends of the peptidoglycan chains, with concomitant formation of a 1,6-anhydrobond in the MurNAc residue.</text>
        <dbReference type="EC" id="4.2.2.n1"/>
    </reaction>
</comment>
<comment type="subcellular location">
    <subcellularLocation>
        <location>Periplasm</location>
    </subcellularLocation>
    <text>Tightly associated with the murein sacculus.</text>
</comment>
<comment type="similarity">
    <text evidence="2">Belongs to the transglycosylase Slt family.</text>
</comment>
<comment type="sequence caution" evidence="2">
    <conflict type="erroneous initiation">
        <sequence resource="EMBL-CDS" id="AAA97288"/>
    </conflict>
    <text>Extended N-terminus.</text>
</comment>
<gene>
    <name type="primary">slt</name>
    <name type="synonym">sltY</name>
    <name type="ordered locus">b4392</name>
    <name type="ordered locus">JW4355</name>
</gene>
<organism>
    <name type="scientific">Escherichia coli (strain K12)</name>
    <dbReference type="NCBI Taxonomy" id="83333"/>
    <lineage>
        <taxon>Bacteria</taxon>
        <taxon>Pseudomonadati</taxon>
        <taxon>Pseudomonadota</taxon>
        <taxon>Gammaproteobacteria</taxon>
        <taxon>Enterobacterales</taxon>
        <taxon>Enterobacteriaceae</taxon>
        <taxon>Escherichia</taxon>
    </lineage>
</organism>
<proteinExistence type="evidence at protein level"/>